<gene>
    <name type="primary">MIR7-3HG</name>
    <name type="synonym">C19orf30</name>
    <name type="synonym">LINC00306</name>
    <name type="synonym">NCRNA00306</name>
    <name type="synonym">PGSF1</name>
</gene>
<reference key="1">
    <citation type="journal article" date="2002" name="J. Mol. Endocrinol.">
        <title>Expression profile of active genes in the human pituitary gland.</title>
        <authorList>
            <person name="Tanaka S."/>
            <person name="Tatsumi K."/>
            <person name="Okubo K."/>
            <person name="Itoh K."/>
            <person name="Kawamoto S."/>
            <person name="Matsubara K."/>
            <person name="Amino N."/>
        </authorList>
    </citation>
    <scope>NUCLEOTIDE SEQUENCE [MRNA] (ISOFORMS 1 AND 2)</scope>
    <scope>TISSUE SPECIFICITY</scope>
    <source>
        <tissue>Pituitary</tissue>
    </source>
</reference>
<reference key="2">
    <citation type="journal article" date="2004" name="Nature">
        <title>The DNA sequence and biology of human chromosome 19.</title>
        <authorList>
            <person name="Grimwood J."/>
            <person name="Gordon L.A."/>
            <person name="Olsen A.S."/>
            <person name="Terry A."/>
            <person name="Schmutz J."/>
            <person name="Lamerdin J.E."/>
            <person name="Hellsten U."/>
            <person name="Goodstein D."/>
            <person name="Couronne O."/>
            <person name="Tran-Gyamfi M."/>
            <person name="Aerts A."/>
            <person name="Altherr M."/>
            <person name="Ashworth L."/>
            <person name="Bajorek E."/>
            <person name="Black S."/>
            <person name="Branscomb E."/>
            <person name="Caenepeel S."/>
            <person name="Carrano A.V."/>
            <person name="Caoile C."/>
            <person name="Chan Y.M."/>
            <person name="Christensen M."/>
            <person name="Cleland C.A."/>
            <person name="Copeland A."/>
            <person name="Dalin E."/>
            <person name="Dehal P."/>
            <person name="Denys M."/>
            <person name="Detter J.C."/>
            <person name="Escobar J."/>
            <person name="Flowers D."/>
            <person name="Fotopulos D."/>
            <person name="Garcia C."/>
            <person name="Georgescu A.M."/>
            <person name="Glavina T."/>
            <person name="Gomez M."/>
            <person name="Gonzales E."/>
            <person name="Groza M."/>
            <person name="Hammon N."/>
            <person name="Hawkins T."/>
            <person name="Haydu L."/>
            <person name="Ho I."/>
            <person name="Huang W."/>
            <person name="Israni S."/>
            <person name="Jett J."/>
            <person name="Kadner K."/>
            <person name="Kimball H."/>
            <person name="Kobayashi A."/>
            <person name="Larionov V."/>
            <person name="Leem S.-H."/>
            <person name="Lopez F."/>
            <person name="Lou Y."/>
            <person name="Lowry S."/>
            <person name="Malfatti S."/>
            <person name="Martinez D."/>
            <person name="McCready P.M."/>
            <person name="Medina C."/>
            <person name="Morgan J."/>
            <person name="Nelson K."/>
            <person name="Nolan M."/>
            <person name="Ovcharenko I."/>
            <person name="Pitluck S."/>
            <person name="Pollard M."/>
            <person name="Popkie A.P."/>
            <person name="Predki P."/>
            <person name="Quan G."/>
            <person name="Ramirez L."/>
            <person name="Rash S."/>
            <person name="Retterer J."/>
            <person name="Rodriguez A."/>
            <person name="Rogers S."/>
            <person name="Salamov A."/>
            <person name="Salazar A."/>
            <person name="She X."/>
            <person name="Smith D."/>
            <person name="Slezak T."/>
            <person name="Solovyev V."/>
            <person name="Thayer N."/>
            <person name="Tice H."/>
            <person name="Tsai M."/>
            <person name="Ustaszewska A."/>
            <person name="Vo N."/>
            <person name="Wagner M."/>
            <person name="Wheeler J."/>
            <person name="Wu K."/>
            <person name="Xie G."/>
            <person name="Yang J."/>
            <person name="Dubchak I."/>
            <person name="Furey T.S."/>
            <person name="DeJong P."/>
            <person name="Dickson M."/>
            <person name="Gordon D."/>
            <person name="Eichler E.E."/>
            <person name="Pennacchio L.A."/>
            <person name="Richardson P."/>
            <person name="Stubbs L."/>
            <person name="Rokhsar D.S."/>
            <person name="Myers R.M."/>
            <person name="Rubin E.M."/>
            <person name="Lucas S.M."/>
        </authorList>
    </citation>
    <scope>NUCLEOTIDE SEQUENCE [LARGE SCALE GENOMIC DNA]</scope>
</reference>
<reference key="3">
    <citation type="submission" date="2005-09" db="EMBL/GenBank/DDBJ databases">
        <authorList>
            <person name="Mural R.J."/>
            <person name="Istrail S."/>
            <person name="Sutton G.G."/>
            <person name="Florea L."/>
            <person name="Halpern A.L."/>
            <person name="Mobarry C.M."/>
            <person name="Lippert R."/>
            <person name="Walenz B."/>
            <person name="Shatkay H."/>
            <person name="Dew I."/>
            <person name="Miller J.R."/>
            <person name="Flanigan M.J."/>
            <person name="Edwards N.J."/>
            <person name="Bolanos R."/>
            <person name="Fasulo D."/>
            <person name="Halldorsson B.V."/>
            <person name="Hannenhalli S."/>
            <person name="Turner R."/>
            <person name="Yooseph S."/>
            <person name="Lu F."/>
            <person name="Nusskern D.R."/>
            <person name="Shue B.C."/>
            <person name="Zheng X.H."/>
            <person name="Zhong F."/>
            <person name="Delcher A.L."/>
            <person name="Huson D.H."/>
            <person name="Kravitz S.A."/>
            <person name="Mouchard L."/>
            <person name="Reinert K."/>
            <person name="Remington K.A."/>
            <person name="Clark A.G."/>
            <person name="Waterman M.S."/>
            <person name="Eichler E.E."/>
            <person name="Adams M.D."/>
            <person name="Hunkapiller M.W."/>
            <person name="Myers E.W."/>
            <person name="Venter J.C."/>
        </authorList>
    </citation>
    <scope>NUCLEOTIDE SEQUENCE [LARGE SCALE GENOMIC DNA]</scope>
</reference>
<reference key="4">
    <citation type="journal article" date="2004" name="Genome Res.">
        <title>The status, quality, and expansion of the NIH full-length cDNA project: the Mammalian Gene Collection (MGC).</title>
        <authorList>
            <consortium name="The MGC Project Team"/>
        </authorList>
    </citation>
    <scope>NUCLEOTIDE SEQUENCE [LARGE SCALE MRNA] (ISOFORM 1)</scope>
    <scope>VARIANTS SER-73 AND GLN-91</scope>
    <source>
        <tissue>Brain</tissue>
    </source>
</reference>
<keyword id="KW-0025">Alternative splicing</keyword>
<keyword id="KW-1185">Reference proteome</keyword>
<sequence length="128" mass="14321">MPGMRLVCRLAHGHFPRKGQRRRSLTVWKAETSRADCLGAPNIRTAPLGRSEKRTAICFSTGAQDSSQRAPFRLQNPGQLLQLGMHSLHLHPELPTTDPAFFCKLHFIKGNDPYCLTISHVKSVLTFS</sequence>
<evidence type="ECO:0000269" key="1">
    <source>
    </source>
</evidence>
<evidence type="ECO:0000269" key="2">
    <source>
    </source>
</evidence>
<evidence type="ECO:0000303" key="3">
    <source>
    </source>
</evidence>
<evidence type="ECO:0000305" key="4"/>
<name>PGSF1_HUMAN</name>
<organism>
    <name type="scientific">Homo sapiens</name>
    <name type="common">Human</name>
    <dbReference type="NCBI Taxonomy" id="9606"/>
    <lineage>
        <taxon>Eukaryota</taxon>
        <taxon>Metazoa</taxon>
        <taxon>Chordata</taxon>
        <taxon>Craniata</taxon>
        <taxon>Vertebrata</taxon>
        <taxon>Euteleostomi</taxon>
        <taxon>Mammalia</taxon>
        <taxon>Eutheria</taxon>
        <taxon>Euarchontoglires</taxon>
        <taxon>Primates</taxon>
        <taxon>Haplorrhini</taxon>
        <taxon>Catarrhini</taxon>
        <taxon>Hominidae</taxon>
        <taxon>Homo</taxon>
    </lineage>
</organism>
<accession>Q8N6C7</accession>
<accession>D6W630</accession>
<accession>Q17RJ9</accession>
<accession>Q8N6C6</accession>
<proteinExistence type="uncertain"/>
<feature type="chain" id="PRO_0000058365" description="Putative uncharacterized protein encoded by MIR7-3HG">
    <location>
        <begin position="1"/>
        <end position="128"/>
    </location>
</feature>
<feature type="splice variant" id="VSP_014375" description="In isoform 2." evidence="3">
    <original>LGMHSLHLH</original>
    <variation>PPKVLGLQA</variation>
    <location>
        <begin position="83"/>
        <end position="91"/>
    </location>
</feature>
<feature type="splice variant" id="VSP_014376" description="In isoform 2." evidence="3">
    <location>
        <begin position="92"/>
        <end position="128"/>
    </location>
</feature>
<feature type="sequence variant" id="VAR_030681" description="In dbSNP:rs11878617." evidence="2">
    <original>R</original>
    <variation>S</variation>
    <location>
        <position position="73"/>
    </location>
</feature>
<feature type="sequence variant" id="VAR_030682" description="In dbSNP:rs3760955." evidence="2">
    <original>H</original>
    <variation>Q</variation>
    <location>
        <position position="91"/>
    </location>
</feature>
<dbReference type="EMBL" id="AB058892">
    <property type="protein sequence ID" value="BAB40233.2"/>
    <property type="molecule type" value="mRNA"/>
</dbReference>
<dbReference type="EMBL" id="AB058893">
    <property type="protein sequence ID" value="BAB40234.2"/>
    <property type="molecule type" value="mRNA"/>
</dbReference>
<dbReference type="EMBL" id="AC006537">
    <property type="status" value="NOT_ANNOTATED_CDS"/>
    <property type="molecule type" value="Genomic_DNA"/>
</dbReference>
<dbReference type="EMBL" id="CH471139">
    <property type="protein sequence ID" value="EAW69196.1"/>
    <property type="molecule type" value="Genomic_DNA"/>
</dbReference>
<dbReference type="EMBL" id="CH471139">
    <property type="protein sequence ID" value="EAW69197.1"/>
    <property type="molecule type" value="Genomic_DNA"/>
</dbReference>
<dbReference type="EMBL" id="BC117294">
    <property type="status" value="NOT_ANNOTATED_CDS"/>
    <property type="molecule type" value="mRNA"/>
</dbReference>
<dbReference type="EMBL" id="BC117296">
    <property type="status" value="NOT_ANNOTATED_CDS"/>
    <property type="molecule type" value="mRNA"/>
</dbReference>
<dbReference type="BioMuta" id="HGNC:30049"/>
<dbReference type="ProteomicsDB" id="72157">
    <molecule id="Q8N6C7-2"/>
</dbReference>
<dbReference type="AGR" id="HGNC:30049"/>
<dbReference type="GeneCards" id="MIR7-3HG"/>
<dbReference type="HGNC" id="HGNC:30049">
    <property type="gene designation" value="MIR7-3HG"/>
</dbReference>
<dbReference type="neXtProt" id="NX_Q8N6C7"/>
<dbReference type="InParanoid" id="Q8N6C7"/>
<dbReference type="PAN-GO" id="Q8N6C7">
    <property type="GO annotations" value="0 GO annotations based on evolutionary models"/>
</dbReference>
<dbReference type="PathwayCommons" id="Q8N6C7"/>
<dbReference type="Pharos" id="Q8N6C7">
    <property type="development level" value="Tdark"/>
</dbReference>
<dbReference type="PRO" id="PR:Q8N6C7"/>
<dbReference type="Proteomes" id="UP000005640">
    <property type="component" value="Unplaced"/>
</dbReference>
<dbReference type="RNAct" id="Q8N6C7">
    <property type="molecule type" value="protein"/>
</dbReference>
<protein>
    <recommendedName>
        <fullName>Putative uncharacterized protein encoded by MIR7-3HG</fullName>
    </recommendedName>
    <alternativeName>
        <fullName>Pituitary gland-specific factor 1</fullName>
    </alternativeName>
</protein>
<comment type="alternative products">
    <event type="alternative splicing"/>
    <isoform>
        <id>Q8N6C7-1</id>
        <name>1</name>
        <name>PGSF1a</name>
        <sequence type="displayed"/>
    </isoform>
    <isoform>
        <id>Q8N6C7-2</id>
        <name>2</name>
        <name>PGSF1b</name>
        <sequence type="described" ref="VSP_014375 VSP_014376"/>
    </isoform>
</comment>
<comment type="tissue specificity">
    <text evidence="1">High expression in pituitary gland and weak in pancreas.</text>
</comment>
<comment type="miscellaneous">
    <molecule>Isoform 2</molecule>
    <text evidence="4">May be produced at very low levels due to a premature stop codon in the mRNA, leading to nonsense-mediated mRNA decay.</text>
</comment>
<comment type="caution">
    <text evidence="4">Product of a dubious CDS prediction. May be a non-coding RNA.</text>
</comment>